<protein>
    <recommendedName>
        <fullName>Pleurostatin</fullName>
    </recommendedName>
</protein>
<feature type="chain" id="PRO_0000244490" description="Pleurostatin">
    <location>
        <begin position="1"/>
        <end position="8" status="greater than"/>
    </location>
</feature>
<feature type="non-terminal residue" evidence="2">
    <location>
        <position position="8"/>
    </location>
</feature>
<proteinExistence type="evidence at protein level"/>
<evidence type="ECO:0000269" key="1">
    <source>
    </source>
</evidence>
<evidence type="ECO:0000303" key="2">
    <source>
    </source>
</evidence>
<evidence type="ECO:0000305" key="3"/>
<comment type="function">
    <text evidence="1">Antifungal activity. Inhibits mycelial growth of F.oxysporum, M.oxysporum and P.piricola. Inhibits cell-free translation with an IC(50) of 28 uM. Antiproliferative activity against MBL2 and L1210 tumor cell lines in vitro.</text>
</comment>
<organism>
    <name type="scientific">Pleurotus ostreatus</name>
    <name type="common">Oyster mushroom</name>
    <name type="synonym">White-rot fungus</name>
    <dbReference type="NCBI Taxonomy" id="5322"/>
    <lineage>
        <taxon>Eukaryota</taxon>
        <taxon>Fungi</taxon>
        <taxon>Dikarya</taxon>
        <taxon>Basidiomycota</taxon>
        <taxon>Agaricomycotina</taxon>
        <taxon>Agaricomycetes</taxon>
        <taxon>Agaricomycetidae</taxon>
        <taxon>Agaricales</taxon>
        <taxon>Pleurotineae</taxon>
        <taxon>Pleurotaceae</taxon>
        <taxon>Pleurotus</taxon>
    </lineage>
</organism>
<dbReference type="GO" id="GO:0050832">
    <property type="term" value="P:defense response to fungus"/>
    <property type="evidence" value="ECO:0000314"/>
    <property type="project" value="UniProtKB"/>
</dbReference>
<dbReference type="GO" id="GO:0031640">
    <property type="term" value="P:killing of cells of another organism"/>
    <property type="evidence" value="ECO:0007669"/>
    <property type="project" value="UniProtKB-KW"/>
</dbReference>
<name>PLEUR_PLEOS</name>
<accession>P84866</accession>
<reference evidence="3" key="1">
    <citation type="journal article" date="2005" name="Peptides">
        <title>Pleurostrin, an antifungal peptide from the oyster mushroom.</title>
        <authorList>
            <person name="Chu K.T."/>
            <person name="Xia L."/>
            <person name="Ng T.B."/>
        </authorList>
    </citation>
    <scope>PROTEIN SEQUENCE</scope>
    <scope>FUNCTION</scope>
    <source>
        <tissue evidence="1">Fruiting body</tissue>
    </source>
</reference>
<sequence length="8" mass="964">VRPYLVAF</sequence>
<keyword id="KW-0929">Antimicrobial</keyword>
<keyword id="KW-0903">Direct protein sequencing</keyword>
<keyword id="KW-0295">Fungicide</keyword>